<keyword id="KW-0903">Direct protein sequencing</keyword>
<keyword id="KW-1015">Disulfide bond</keyword>
<keyword id="KW-0928">Hypersensitive response elicitation</keyword>
<keyword id="KW-0964">Secreted</keyword>
<organism>
    <name type="scientific">Phytophthora hibernalis</name>
    <dbReference type="NCBI Taxonomy" id="175300"/>
    <lineage>
        <taxon>Eukaryota</taxon>
        <taxon>Sar</taxon>
        <taxon>Stramenopiles</taxon>
        <taxon>Oomycota</taxon>
        <taxon>Peronosporales</taxon>
        <taxon>Peronosporaceae</taxon>
        <taxon>Phytophthora</taxon>
    </lineage>
</organism>
<name>ELIA_PHYHI</name>
<feature type="chain" id="PRO_0000320154" description="Alpha-elicitin hibernalin">
    <location>
        <begin position="1"/>
        <end position="98"/>
    </location>
</feature>
<feature type="disulfide bond" evidence="1">
    <location>
        <begin position="3"/>
        <end position="71"/>
    </location>
</feature>
<feature type="disulfide bond" evidence="1">
    <location>
        <begin position="27"/>
        <end position="56"/>
    </location>
</feature>
<feature type="disulfide bond" evidence="1">
    <location>
        <begin position="51"/>
        <end position="95"/>
    </location>
</feature>
<accession>P85174</accession>
<evidence type="ECO:0000250" key="1">
    <source>
        <dbReference type="UniProtKB" id="P15571"/>
    </source>
</evidence>
<evidence type="ECO:0000255" key="2"/>
<evidence type="ECO:0000269" key="3">
    <source>
    </source>
</evidence>
<evidence type="ECO:0000305" key="4"/>
<proteinExistence type="evidence at protein level"/>
<reference evidence="4" key="1">
    <citation type="journal article" date="2008" name="J. Biochem.">
        <title>Isolation, characterization and structure-elicitor activity relationships of hibernalin and its two oxidized forms from Phytophthora hibernalis Carne 1925.</title>
        <authorList>
            <person name="Capasso R."/>
            <person name="Di Maro A."/>
            <person name="Cristinzio G."/>
            <person name="De Martino A."/>
            <person name="Chambery A."/>
            <person name="Daniele A."/>
            <person name="Sannino F."/>
            <person name="Testa A."/>
            <person name="Parente A."/>
        </authorList>
    </citation>
    <scope>PROTEIN SEQUENCE</scope>
    <scope>FUNCTION</scope>
    <scope>SUBCELLULAR LOCATION</scope>
    <scope>MASS SPECTROMETRY</scope>
</reference>
<comment type="function">
    <text evidence="3 4">Induces local and distal defense responses (incompatible hypersensitive reaction) in plants from the solanaceae and cruciferae families. Elicits leaf necrosis and causes the accumulation of pathogenesis-related proteins. Might interact with the lipidic molecules of the plasma membrane.</text>
</comment>
<comment type="subcellular location">
    <subcellularLocation>
        <location evidence="3">Secreted</location>
    </subcellularLocation>
</comment>
<comment type="mass spectrometry"/>
<comment type="mass spectrometry"/>
<comment type="similarity">
    <text evidence="2">Belongs to the elicitin family.</text>
</comment>
<dbReference type="SMR" id="P85174"/>
<dbReference type="GO" id="GO:0005576">
    <property type="term" value="C:extracellular region"/>
    <property type="evidence" value="ECO:0007669"/>
    <property type="project" value="UniProtKB-SubCell"/>
</dbReference>
<dbReference type="GO" id="GO:0052040">
    <property type="term" value="P:symbiont-mediated perturbation of host programmed cell death"/>
    <property type="evidence" value="ECO:0007669"/>
    <property type="project" value="UniProtKB-KW"/>
</dbReference>
<dbReference type="Gene3D" id="1.10.239.10">
    <property type="entry name" value="Elicitin domain"/>
    <property type="match status" value="1"/>
</dbReference>
<dbReference type="InterPro" id="IPR002200">
    <property type="entry name" value="Elicitin"/>
</dbReference>
<dbReference type="InterPro" id="IPR036470">
    <property type="entry name" value="Elicitin_sf"/>
</dbReference>
<dbReference type="Pfam" id="PF00964">
    <property type="entry name" value="Elicitin"/>
    <property type="match status" value="1"/>
</dbReference>
<dbReference type="PRINTS" id="PR00948">
    <property type="entry name" value="ELICITIN"/>
</dbReference>
<dbReference type="SMART" id="SM01187">
    <property type="entry name" value="Elicitin"/>
    <property type="match status" value="1"/>
</dbReference>
<dbReference type="SUPFAM" id="SSF48647">
    <property type="entry name" value="Fungal elicitin"/>
    <property type="match status" value="1"/>
</dbReference>
<sequence>TTCTTTQQTAAYVALVSILSDSSFNQCATDSGYSMLTATALPTTAQYKLMCASTACKTMITKIVSLNAPDCELTVPTSGLVLNVYSYANGFSSTCASL</sequence>
<protein>
    <recommendedName>
        <fullName>Alpha-elicitin hibernalin</fullName>
    </recommendedName>
</protein>